<keyword id="KW-0067">ATP-binding</keyword>
<keyword id="KW-0444">Lipid biosynthesis</keyword>
<keyword id="KW-0443">Lipid metabolism</keyword>
<keyword id="KW-0496">Mitochondrion</keyword>
<keyword id="KW-0547">Nucleotide-binding</keyword>
<keyword id="KW-0594">Phospholipid biosynthesis</keyword>
<keyword id="KW-1208">Phospholipid metabolism</keyword>
<keyword id="KW-1185">Reference proteome</keyword>
<keyword id="KW-0677">Repeat</keyword>
<keyword id="KW-0808">Transferase</keyword>
<keyword id="KW-0809">Transit peptide</keyword>
<comment type="function">
    <text evidence="1">Functions in the biosynthesis of the anionic phospholipids phosphatidylglycerol and cardiolipin.</text>
</comment>
<comment type="catalytic activity">
    <reaction>
        <text>a CDP-1,2-diacyl-sn-glycerol + sn-glycerol 3-phosphate = a 1,2-diacyl-sn-glycero-3-phospho-(1'-sn-glycero-3'-phosphate) + CMP + H(+)</text>
        <dbReference type="Rhea" id="RHEA:12593"/>
        <dbReference type="ChEBI" id="CHEBI:15378"/>
        <dbReference type="ChEBI" id="CHEBI:57597"/>
        <dbReference type="ChEBI" id="CHEBI:58332"/>
        <dbReference type="ChEBI" id="CHEBI:60110"/>
        <dbReference type="ChEBI" id="CHEBI:60377"/>
        <dbReference type="EC" id="2.7.8.5"/>
    </reaction>
</comment>
<comment type="activity regulation">
    <text evidence="1">Activated by calcium and magnesium and inhibited by other bivalent cations.</text>
</comment>
<comment type="pathway">
    <text>Phospholipid metabolism; phosphatidylglycerol biosynthesis; phosphatidylglycerol from CDP-diacylglycerol: step 1/2.</text>
</comment>
<comment type="subcellular location">
    <subcellularLocation>
        <location evidence="1">Mitochondrion</location>
    </subcellularLocation>
</comment>
<comment type="similarity">
    <text evidence="5">Belongs to the CDP-alcohol phosphatidyltransferase class-II family.</text>
</comment>
<organism>
    <name type="scientific">Gallus gallus</name>
    <name type="common">Chicken</name>
    <dbReference type="NCBI Taxonomy" id="9031"/>
    <lineage>
        <taxon>Eukaryota</taxon>
        <taxon>Metazoa</taxon>
        <taxon>Chordata</taxon>
        <taxon>Craniata</taxon>
        <taxon>Vertebrata</taxon>
        <taxon>Euteleostomi</taxon>
        <taxon>Archelosauria</taxon>
        <taxon>Archosauria</taxon>
        <taxon>Dinosauria</taxon>
        <taxon>Saurischia</taxon>
        <taxon>Theropoda</taxon>
        <taxon>Coelurosauria</taxon>
        <taxon>Aves</taxon>
        <taxon>Neognathae</taxon>
        <taxon>Galloanserae</taxon>
        <taxon>Galliformes</taxon>
        <taxon>Phasianidae</taxon>
        <taxon>Phasianinae</taxon>
        <taxon>Gallus</taxon>
    </lineage>
</organism>
<protein>
    <recommendedName>
        <fullName>CDP-diacylglycerol--glycerol-3-phosphate 3-phosphatidyltransferase, mitochondrial</fullName>
        <ecNumber>2.7.8.5</ecNumber>
    </recommendedName>
    <alternativeName>
        <fullName>Phosphatidylglycerophosphate synthase 1</fullName>
        <shortName>PGP synthase 1</shortName>
    </alternativeName>
</protein>
<sequence>MAAAGGAALWRRLAAWLPRGPPGLAALLGRLSDRLSRGRDRRSRRSSWLLLAPLLTPPVPVITAMPCSLCPEGAHRFQWIRNLVPEFGISSSHVKVLSSPAEFYELLKVQIKTAKQRVVMASLYLGTGLLEQELVNCLEETLEKSLQANESPNLRVSILLDYTRGSRGRKNSRTMLIPLLQRFPEQVRVSLFHTPNLRGLLKLLIPERFNETIGLQHIKVYLFDDNVILSGANLSDLYFTNRQDRYVLLQDSPEIADFFTELVDAIGDVSLQLQQDDTVQMMEGMVHPYQGDKVRYCEIANQRVMEVIDSARTRQELLHAKTFHSSQQGSSMLPQHDSEASEGLKPEPDTWIYPLIQMKPFGIQIDEMVTETLLTEAERDAKIYLTTGYFNLTQAYMDLILGTRAEYRILLASPEVNGFFGAKGVAGAIPSAYVYIEHQFYNEVCCLHQQERVQLQEYSRAGWTFHAKGLWLYLAGSSLPCLTLIGSPNFGYRSVHRDLEAQVAIVTENKALQQQLHQEQEQLYLCSGVVSSSTFEQPSRHVKLWVKLVTPLIKNFF</sequence>
<feature type="transit peptide" description="Mitochondrion" evidence="2">
    <location>
        <begin position="1"/>
        <end position="25"/>
    </location>
</feature>
<feature type="chain" id="PRO_0000337109" description="CDP-diacylglycerol--glycerol-3-phosphate 3-phosphatidyltransferase, mitochondrial">
    <location>
        <begin position="26"/>
        <end position="557"/>
    </location>
</feature>
<feature type="domain" description="PLD phosphodiesterase 1" evidence="3">
    <location>
        <begin position="212"/>
        <end position="238"/>
    </location>
</feature>
<feature type="domain" description="PLD phosphodiesterase 2" evidence="3">
    <location>
        <begin position="461"/>
        <end position="494"/>
    </location>
</feature>
<feature type="region of interest" description="Disordered" evidence="4">
    <location>
        <begin position="322"/>
        <end position="346"/>
    </location>
</feature>
<feature type="compositionally biased region" description="Polar residues" evidence="4">
    <location>
        <begin position="323"/>
        <end position="333"/>
    </location>
</feature>
<feature type="compositionally biased region" description="Basic and acidic residues" evidence="4">
    <location>
        <begin position="336"/>
        <end position="346"/>
    </location>
</feature>
<feature type="active site" evidence="3">
    <location>
        <position position="217"/>
    </location>
</feature>
<feature type="active site" evidence="3">
    <location>
        <position position="219"/>
    </location>
</feature>
<feature type="active site" evidence="3">
    <location>
        <position position="224"/>
    </location>
</feature>
<feature type="binding site" evidence="2">
    <location>
        <begin position="121"/>
        <end position="128"/>
    </location>
    <ligand>
        <name>ATP</name>
        <dbReference type="ChEBI" id="CHEBI:30616"/>
    </ligand>
</feature>
<name>PGPS1_CHICK</name>
<reference key="1">
    <citation type="journal article" date="2005" name="Genome Biol.">
        <title>Full-length cDNAs from chicken bursal lymphocytes to facilitate gene function analysis.</title>
        <authorList>
            <person name="Caldwell R.B."/>
            <person name="Kierzek A.M."/>
            <person name="Arakawa H."/>
            <person name="Bezzubov Y."/>
            <person name="Zaim J."/>
            <person name="Fiedler P."/>
            <person name="Kutter S."/>
            <person name="Blagodatski A."/>
            <person name="Kostovska D."/>
            <person name="Koter M."/>
            <person name="Plachy J."/>
            <person name="Carninci P."/>
            <person name="Hayashizaki Y."/>
            <person name="Buerstedde J.-M."/>
        </authorList>
    </citation>
    <scope>NUCLEOTIDE SEQUENCE [LARGE SCALE MRNA]</scope>
    <source>
        <strain>CB</strain>
        <tissue>Bursa of Fabricius</tissue>
    </source>
</reference>
<evidence type="ECO:0000250" key="1"/>
<evidence type="ECO:0000255" key="2"/>
<evidence type="ECO:0000255" key="3">
    <source>
        <dbReference type="PROSITE-ProRule" id="PRU00153"/>
    </source>
</evidence>
<evidence type="ECO:0000256" key="4">
    <source>
        <dbReference type="SAM" id="MobiDB-lite"/>
    </source>
</evidence>
<evidence type="ECO:0000305" key="5"/>
<accession>Q5ZHN9</accession>
<dbReference type="EC" id="2.7.8.5"/>
<dbReference type="EMBL" id="AJ721095">
    <property type="protein sequence ID" value="CAG32754.1"/>
    <property type="molecule type" value="mRNA"/>
</dbReference>
<dbReference type="RefSeq" id="NP_001008463.1">
    <property type="nucleotide sequence ID" value="NM_001008463.2"/>
</dbReference>
<dbReference type="SMR" id="Q5ZHN9"/>
<dbReference type="FunCoup" id="Q5ZHN9">
    <property type="interactions" value="1280"/>
</dbReference>
<dbReference type="STRING" id="9031.ENSGALP00000011616"/>
<dbReference type="PaxDb" id="9031-ENSGALP00000011616"/>
<dbReference type="Ensembl" id="ENSGALT00000110513">
    <property type="protein sequence ID" value="ENSGALP00000078120"/>
    <property type="gene ID" value="ENSGALG00000007181"/>
</dbReference>
<dbReference type="Ensembl" id="ENSGALT00010070845.1">
    <property type="protein sequence ID" value="ENSGALP00010043536.1"/>
    <property type="gene ID" value="ENSGALG00010029294.1"/>
</dbReference>
<dbReference type="GeneID" id="422087"/>
<dbReference type="KEGG" id="gga:422087"/>
<dbReference type="CTD" id="9489"/>
<dbReference type="VEuPathDB" id="HostDB:geneid_422087"/>
<dbReference type="eggNOG" id="KOG3964">
    <property type="taxonomic scope" value="Eukaryota"/>
</dbReference>
<dbReference type="GeneTree" id="ENSGT00390000002373"/>
<dbReference type="HOGENOM" id="CLU_030471_1_2_1"/>
<dbReference type="InParanoid" id="Q5ZHN9"/>
<dbReference type="OMA" id="HKCLAQC"/>
<dbReference type="OrthoDB" id="10250191at2759"/>
<dbReference type="PhylomeDB" id="Q5ZHN9"/>
<dbReference type="TreeFam" id="TF314768"/>
<dbReference type="UniPathway" id="UPA00084">
    <property type="reaction ID" value="UER00503"/>
</dbReference>
<dbReference type="PRO" id="PR:Q5ZHN9"/>
<dbReference type="Proteomes" id="UP000000539">
    <property type="component" value="Chromosome 18"/>
</dbReference>
<dbReference type="GO" id="GO:0005739">
    <property type="term" value="C:mitochondrion"/>
    <property type="evidence" value="ECO:0007669"/>
    <property type="project" value="UniProtKB-SubCell"/>
</dbReference>
<dbReference type="GO" id="GO:0005524">
    <property type="term" value="F:ATP binding"/>
    <property type="evidence" value="ECO:0007669"/>
    <property type="project" value="UniProtKB-KW"/>
</dbReference>
<dbReference type="GO" id="GO:0008444">
    <property type="term" value="F:CDP-diacylglycerol-glycerol-3-phosphate 3-phosphatidyltransferase activity"/>
    <property type="evidence" value="ECO:0007669"/>
    <property type="project" value="UniProtKB-EC"/>
</dbReference>
<dbReference type="GO" id="GO:0032049">
    <property type="term" value="P:cardiolipin biosynthetic process"/>
    <property type="evidence" value="ECO:0007669"/>
    <property type="project" value="InterPro"/>
</dbReference>
<dbReference type="CDD" id="cd09135">
    <property type="entry name" value="PLDc_PGS1_euk_1"/>
    <property type="match status" value="1"/>
</dbReference>
<dbReference type="CDD" id="cd09137">
    <property type="entry name" value="PLDc_PGS1_euk_2"/>
    <property type="match status" value="1"/>
</dbReference>
<dbReference type="Gene3D" id="3.30.870.10">
    <property type="entry name" value="Endonuclease Chain A"/>
    <property type="match status" value="2"/>
</dbReference>
<dbReference type="InterPro" id="IPR016270">
    <property type="entry name" value="PGS1"/>
</dbReference>
<dbReference type="InterPro" id="IPR001736">
    <property type="entry name" value="PLipase_D/transphosphatidylase"/>
</dbReference>
<dbReference type="PANTHER" id="PTHR12586:SF1">
    <property type="entry name" value="CDP-DIACYLGLYCEROL--GLYCEROL-3-PHOSPHATE 3-PHOSPHATIDYLTRANSFERASE, MITOCHONDRIAL"/>
    <property type="match status" value="1"/>
</dbReference>
<dbReference type="PANTHER" id="PTHR12586">
    <property type="entry name" value="CDP-DIACYLGLYCEROL--SERINE O-PHOSPHATIDYLTRANSFERASE"/>
    <property type="match status" value="1"/>
</dbReference>
<dbReference type="PIRSF" id="PIRSF000850">
    <property type="entry name" value="Phospholipase_D_PSS"/>
    <property type="match status" value="1"/>
</dbReference>
<dbReference type="SUPFAM" id="SSF56024">
    <property type="entry name" value="Phospholipase D/nuclease"/>
    <property type="match status" value="1"/>
</dbReference>
<dbReference type="PROSITE" id="PS50035">
    <property type="entry name" value="PLD"/>
    <property type="match status" value="1"/>
</dbReference>
<gene>
    <name type="primary">PGS1</name>
    <name type="ORF">RCJMB04_35a14</name>
</gene>
<proteinExistence type="evidence at transcript level"/>